<comment type="function">
    <text>IGPS catalyzes the conversion of PRFAR and glutamine to IGP, AICAR and glutamate. The glutaminase domain produces the ammonia necessary for the cyclase domain to produce IGP and AICAR from PRFAR. The ammonia is channeled to the active site of the cyclase domain.</text>
</comment>
<comment type="catalytic activity">
    <reaction>
        <text>5-[(5-phospho-1-deoxy-D-ribulos-1-ylimino)methylamino]-1-(5-phospho-beta-D-ribosyl)imidazole-4-carboxamide + L-glutamine = D-erythro-1-(imidazol-4-yl)glycerol 3-phosphate + 5-amino-1-(5-phospho-beta-D-ribosyl)imidazole-4-carboxamide + L-glutamate + H(+)</text>
        <dbReference type="Rhea" id="RHEA:24793"/>
        <dbReference type="ChEBI" id="CHEBI:15378"/>
        <dbReference type="ChEBI" id="CHEBI:29985"/>
        <dbReference type="ChEBI" id="CHEBI:58278"/>
        <dbReference type="ChEBI" id="CHEBI:58359"/>
        <dbReference type="ChEBI" id="CHEBI:58475"/>
        <dbReference type="ChEBI" id="CHEBI:58525"/>
        <dbReference type="EC" id="4.3.2.10"/>
    </reaction>
</comment>
<comment type="catalytic activity">
    <reaction>
        <text>L-glutamine + H2O = L-glutamate + NH4(+)</text>
        <dbReference type="Rhea" id="RHEA:15889"/>
        <dbReference type="ChEBI" id="CHEBI:15377"/>
        <dbReference type="ChEBI" id="CHEBI:28938"/>
        <dbReference type="ChEBI" id="CHEBI:29985"/>
        <dbReference type="ChEBI" id="CHEBI:58359"/>
        <dbReference type="EC" id="3.5.1.2"/>
    </reaction>
</comment>
<comment type="pathway">
    <text>Amino-acid biosynthesis; L-histidine biosynthesis; L-histidine from 5-phospho-alpha-D-ribose 1-diphosphate: step 5/9.</text>
</comment>
<comment type="subcellular location">
    <subcellularLocation>
        <location>Plastid</location>
        <location>Chloroplast</location>
    </subcellularLocation>
</comment>
<comment type="similarity">
    <text evidence="3">In the C-terminal section; belongs to the HisA/HisF family.</text>
</comment>
<dbReference type="EC" id="4.3.2.10"/>
<dbReference type="EC" id="3.5.1.2"/>
<dbReference type="EMBL" id="AB006210">
    <property type="protein sequence ID" value="BAA28783.1"/>
    <property type="molecule type" value="mRNA"/>
</dbReference>
<dbReference type="EMBL" id="AB016783">
    <property type="protein sequence ID" value="BAA32287.1"/>
    <property type="molecule type" value="Genomic_DNA"/>
</dbReference>
<dbReference type="EMBL" id="AL035440">
    <property type="protein sequence ID" value="CAB36536.1"/>
    <property type="molecule type" value="Genomic_DNA"/>
</dbReference>
<dbReference type="EMBL" id="AL161566">
    <property type="protein sequence ID" value="CAB79545.1"/>
    <property type="molecule type" value="Genomic_DNA"/>
</dbReference>
<dbReference type="EMBL" id="CP002687">
    <property type="protein sequence ID" value="AEE85266.1"/>
    <property type="molecule type" value="Genomic_DNA"/>
</dbReference>
<dbReference type="EMBL" id="AK118498">
    <property type="protein sequence ID" value="BAC43102.1"/>
    <property type="molecule type" value="mRNA"/>
</dbReference>
<dbReference type="EMBL" id="BT005923">
    <property type="protein sequence ID" value="AAO64858.1"/>
    <property type="molecule type" value="mRNA"/>
</dbReference>
<dbReference type="PIR" id="T04813">
    <property type="entry name" value="T04813"/>
</dbReference>
<dbReference type="PIR" id="T48876">
    <property type="entry name" value="T48876"/>
</dbReference>
<dbReference type="RefSeq" id="NP_194420.1">
    <property type="nucleotide sequence ID" value="NM_118824.4"/>
</dbReference>
<dbReference type="SMR" id="Q9SZ30"/>
<dbReference type="BioGRID" id="14084">
    <property type="interactions" value="3"/>
</dbReference>
<dbReference type="FunCoup" id="Q9SZ30">
    <property type="interactions" value="1537"/>
</dbReference>
<dbReference type="IntAct" id="Q9SZ30">
    <property type="interactions" value="1"/>
</dbReference>
<dbReference type="STRING" id="3702.Q9SZ30"/>
<dbReference type="iPTMnet" id="Q9SZ30"/>
<dbReference type="PaxDb" id="3702-AT4G26900.1"/>
<dbReference type="ProteomicsDB" id="230396"/>
<dbReference type="EnsemblPlants" id="AT4G26900.1">
    <property type="protein sequence ID" value="AT4G26900.1"/>
    <property type="gene ID" value="AT4G26900"/>
</dbReference>
<dbReference type="GeneID" id="828797"/>
<dbReference type="Gramene" id="AT4G26900.1">
    <property type="protein sequence ID" value="AT4G26900.1"/>
    <property type="gene ID" value="AT4G26900"/>
</dbReference>
<dbReference type="KEGG" id="ath:AT4G26900"/>
<dbReference type="Araport" id="AT4G26900"/>
<dbReference type="TAIR" id="AT4G26900">
    <property type="gene designation" value="AT-HF"/>
</dbReference>
<dbReference type="eggNOG" id="KOG0623">
    <property type="taxonomic scope" value="Eukaryota"/>
</dbReference>
<dbReference type="HOGENOM" id="CLU_037550_0_0_1"/>
<dbReference type="InParanoid" id="Q9SZ30"/>
<dbReference type="OMA" id="GNYGHFV"/>
<dbReference type="OrthoDB" id="10254903at2759"/>
<dbReference type="PhylomeDB" id="Q9SZ30"/>
<dbReference type="BioCyc" id="ARA:AT4G26900-MONOMER"/>
<dbReference type="BioCyc" id="MetaCyc:AT4G26900-MONOMER"/>
<dbReference type="BRENDA" id="4.3.2.10">
    <property type="organism ID" value="399"/>
</dbReference>
<dbReference type="UniPathway" id="UPA00031">
    <property type="reaction ID" value="UER00010"/>
</dbReference>
<dbReference type="CD-CODE" id="4299E36E">
    <property type="entry name" value="Nucleolus"/>
</dbReference>
<dbReference type="PRO" id="PR:Q9SZ30"/>
<dbReference type="Proteomes" id="UP000006548">
    <property type="component" value="Chromosome 4"/>
</dbReference>
<dbReference type="ExpressionAtlas" id="Q9SZ30">
    <property type="expression patterns" value="baseline and differential"/>
</dbReference>
<dbReference type="GO" id="GO:0009507">
    <property type="term" value="C:chloroplast"/>
    <property type="evidence" value="ECO:0007005"/>
    <property type="project" value="TAIR"/>
</dbReference>
<dbReference type="GO" id="GO:0009570">
    <property type="term" value="C:chloroplast stroma"/>
    <property type="evidence" value="ECO:0007005"/>
    <property type="project" value="TAIR"/>
</dbReference>
<dbReference type="GO" id="GO:0009536">
    <property type="term" value="C:plastid"/>
    <property type="evidence" value="ECO:0007005"/>
    <property type="project" value="TAIR"/>
</dbReference>
<dbReference type="GO" id="GO:0004359">
    <property type="term" value="F:glutaminase activity"/>
    <property type="evidence" value="ECO:0007669"/>
    <property type="project" value="UniProtKB-EC"/>
</dbReference>
<dbReference type="GO" id="GO:0000107">
    <property type="term" value="F:imidazoleglycerol-phosphate synthase activity"/>
    <property type="evidence" value="ECO:0007669"/>
    <property type="project" value="InterPro"/>
</dbReference>
<dbReference type="GO" id="GO:0016829">
    <property type="term" value="F:lyase activity"/>
    <property type="evidence" value="ECO:0007669"/>
    <property type="project" value="UniProtKB-KW"/>
</dbReference>
<dbReference type="GO" id="GO:0000105">
    <property type="term" value="P:L-histidine biosynthetic process"/>
    <property type="evidence" value="ECO:0000315"/>
    <property type="project" value="TAIR"/>
</dbReference>
<dbReference type="CDD" id="cd01748">
    <property type="entry name" value="GATase1_IGP_Synthase"/>
    <property type="match status" value="1"/>
</dbReference>
<dbReference type="CDD" id="cd04731">
    <property type="entry name" value="HisF"/>
    <property type="match status" value="1"/>
</dbReference>
<dbReference type="FunFam" id="3.20.20.70:FF:000094">
    <property type="entry name" value="Imidazole glycerol phosphate synthase hisHF"/>
    <property type="match status" value="1"/>
</dbReference>
<dbReference type="FunFam" id="3.40.50.880:FF:000036">
    <property type="entry name" value="Imidazole glycerol phosphate synthase hisHF"/>
    <property type="match status" value="1"/>
</dbReference>
<dbReference type="Gene3D" id="3.40.50.880">
    <property type="match status" value="1"/>
</dbReference>
<dbReference type="Gene3D" id="3.20.20.70">
    <property type="entry name" value="Aldolase class I"/>
    <property type="match status" value="1"/>
</dbReference>
<dbReference type="HAMAP" id="MF_00278">
    <property type="entry name" value="HisH"/>
    <property type="match status" value="1"/>
</dbReference>
<dbReference type="InterPro" id="IPR013785">
    <property type="entry name" value="Aldolase_TIM"/>
</dbReference>
<dbReference type="InterPro" id="IPR029062">
    <property type="entry name" value="Class_I_gatase-like"/>
</dbReference>
<dbReference type="InterPro" id="IPR017926">
    <property type="entry name" value="GATASE"/>
</dbReference>
<dbReference type="InterPro" id="IPR006062">
    <property type="entry name" value="His_biosynth"/>
</dbReference>
<dbReference type="InterPro" id="IPR004651">
    <property type="entry name" value="HisF"/>
</dbReference>
<dbReference type="InterPro" id="IPR050064">
    <property type="entry name" value="IGPS_HisA/HisF"/>
</dbReference>
<dbReference type="InterPro" id="IPR014640">
    <property type="entry name" value="IGPS_HisHF"/>
</dbReference>
<dbReference type="InterPro" id="IPR010139">
    <property type="entry name" value="Imidazole-glycPsynth_HisH"/>
</dbReference>
<dbReference type="InterPro" id="IPR011060">
    <property type="entry name" value="RibuloseP-bd_barrel"/>
</dbReference>
<dbReference type="NCBIfam" id="TIGR00735">
    <property type="entry name" value="hisF"/>
    <property type="match status" value="1"/>
</dbReference>
<dbReference type="NCBIfam" id="TIGR01855">
    <property type="entry name" value="IMP_synth_hisH"/>
    <property type="match status" value="1"/>
</dbReference>
<dbReference type="PANTHER" id="PTHR21235:SF2">
    <property type="entry name" value="IMIDAZOLE GLYCEROL PHOSPHATE SYNTHASE HISHF"/>
    <property type="match status" value="1"/>
</dbReference>
<dbReference type="PANTHER" id="PTHR21235">
    <property type="entry name" value="IMIDAZOLE GLYCEROL PHOSPHATE SYNTHASE SUBUNIT HISF/H IGP SYNTHASE SUBUNIT HISF/H"/>
    <property type="match status" value="1"/>
</dbReference>
<dbReference type="Pfam" id="PF00117">
    <property type="entry name" value="GATase"/>
    <property type="match status" value="1"/>
</dbReference>
<dbReference type="Pfam" id="PF00977">
    <property type="entry name" value="His_biosynth"/>
    <property type="match status" value="1"/>
</dbReference>
<dbReference type="PIRSF" id="PIRSF036936">
    <property type="entry name" value="IGPS_HisHF"/>
    <property type="match status" value="1"/>
</dbReference>
<dbReference type="SUPFAM" id="SSF52317">
    <property type="entry name" value="Class I glutamine amidotransferase-like"/>
    <property type="match status" value="1"/>
</dbReference>
<dbReference type="SUPFAM" id="SSF51366">
    <property type="entry name" value="Ribulose-phoshate binding barrel"/>
    <property type="match status" value="1"/>
</dbReference>
<dbReference type="PROSITE" id="PS51273">
    <property type="entry name" value="GATASE_TYPE_1"/>
    <property type="match status" value="1"/>
</dbReference>
<sequence>MEATAAPFSSIVSSRQNFSSSSSIRASSPASLFLSQKSIGNVNRKFKSPRSLSVRASSTSDSVVTLLDYGAGNVRSIRNALRHLGFSIKDVQTPGDILNADRLIFPGVGAFAPAMDVLNRTGMAEALCKYIENDRPFLGICLGLQLLFDSSEENGPVKGLGVIPGIVGRFDASAGIRVPHIGWNALQVGKDSEILDDVGNRHVYFVHSYRAIPSDENKDWISSTCNYGESFISSIRRGNVHAVQFHPEKSGEVGLSVLRRFLHPKLPATQKPMEGKASKLAKRVIACLDVRTNDKGDLVVTKGDQYDVREQSNENEVRNLGKPVDLAGQYYKDGADEISFLNITGFRDFPLGDLPMIQVLRQTSKNVFVPLTVGGGIRDFTDASGRYYSSLEVAAEYFRSGADKISIGSDAVSAAEEFIKSGVKTGKSSLEQISRVYGNQAVVVSIDPRRVYVNHPDDVPYKVIRVTNPGPNGEEYAWYQCTVSGGREGRPIGAFELAKAVEELGAGEILLNCIDCDGQGKGFDIDLVKLISDSVGIPVIASSGAGTPDHFSEVFEKTNASAALAAGIFHRKEVPIQSVKEHLQEERIEVRI</sequence>
<gene>
    <name type="primary">HISN4</name>
    <name type="ordered locus">At4g26900</name>
    <name type="ORF">F10M23.240</name>
</gene>
<reference key="1">
    <citation type="journal article" date="1998" name="FEBS Lett.">
        <title>An Arabidopsis cDNA encoding a bifunctional glutamine amidotransferase/cyclase suppresses the histidine auxotrophy of a Saccharomyces cerevisiae his7 mutant.</title>
        <authorList>
            <person name="Fujimori K."/>
            <person name="Ohta D."/>
        </authorList>
    </citation>
    <scope>NUCLEOTIDE SEQUENCE [MRNA]</scope>
    <source>
        <strain>cv. Columbia</strain>
    </source>
</reference>
<reference key="2">
    <citation type="journal article" date="1999" name="Nature">
        <title>Sequence and analysis of chromosome 4 of the plant Arabidopsis thaliana.</title>
        <authorList>
            <person name="Mayer K.F.X."/>
            <person name="Schueller C."/>
            <person name="Wambutt R."/>
            <person name="Murphy G."/>
            <person name="Volckaert G."/>
            <person name="Pohl T."/>
            <person name="Duesterhoeft A."/>
            <person name="Stiekema W."/>
            <person name="Entian K.-D."/>
            <person name="Terryn N."/>
            <person name="Harris B."/>
            <person name="Ansorge W."/>
            <person name="Brandt P."/>
            <person name="Grivell L.A."/>
            <person name="Rieger M."/>
            <person name="Weichselgartner M."/>
            <person name="de Simone V."/>
            <person name="Obermaier B."/>
            <person name="Mache R."/>
            <person name="Mueller M."/>
            <person name="Kreis M."/>
            <person name="Delseny M."/>
            <person name="Puigdomenech P."/>
            <person name="Watson M."/>
            <person name="Schmidtheini T."/>
            <person name="Reichert B."/>
            <person name="Portetelle D."/>
            <person name="Perez-Alonso M."/>
            <person name="Boutry M."/>
            <person name="Bancroft I."/>
            <person name="Vos P."/>
            <person name="Hoheisel J."/>
            <person name="Zimmermann W."/>
            <person name="Wedler H."/>
            <person name="Ridley P."/>
            <person name="Langham S.-A."/>
            <person name="McCullagh B."/>
            <person name="Bilham L."/>
            <person name="Robben J."/>
            <person name="van der Schueren J."/>
            <person name="Grymonprez B."/>
            <person name="Chuang Y.-J."/>
            <person name="Vandenbussche F."/>
            <person name="Braeken M."/>
            <person name="Weltjens I."/>
            <person name="Voet M."/>
            <person name="Bastiaens I."/>
            <person name="Aert R."/>
            <person name="Defoor E."/>
            <person name="Weitzenegger T."/>
            <person name="Bothe G."/>
            <person name="Ramsperger U."/>
            <person name="Hilbert H."/>
            <person name="Braun M."/>
            <person name="Holzer E."/>
            <person name="Brandt A."/>
            <person name="Peters S."/>
            <person name="van Staveren M."/>
            <person name="Dirkse W."/>
            <person name="Mooijman P."/>
            <person name="Klein Lankhorst R."/>
            <person name="Rose M."/>
            <person name="Hauf J."/>
            <person name="Koetter P."/>
            <person name="Berneiser S."/>
            <person name="Hempel S."/>
            <person name="Feldpausch M."/>
            <person name="Lamberth S."/>
            <person name="Van den Daele H."/>
            <person name="De Keyser A."/>
            <person name="Buysshaert C."/>
            <person name="Gielen J."/>
            <person name="Villarroel R."/>
            <person name="De Clercq R."/>
            <person name="van Montagu M."/>
            <person name="Rogers J."/>
            <person name="Cronin A."/>
            <person name="Quail M.A."/>
            <person name="Bray-Allen S."/>
            <person name="Clark L."/>
            <person name="Doggett J."/>
            <person name="Hall S."/>
            <person name="Kay M."/>
            <person name="Lennard N."/>
            <person name="McLay K."/>
            <person name="Mayes R."/>
            <person name="Pettett A."/>
            <person name="Rajandream M.A."/>
            <person name="Lyne M."/>
            <person name="Benes V."/>
            <person name="Rechmann S."/>
            <person name="Borkova D."/>
            <person name="Bloecker H."/>
            <person name="Scharfe M."/>
            <person name="Grimm M."/>
            <person name="Loehnert T.-H."/>
            <person name="Dose S."/>
            <person name="de Haan M."/>
            <person name="Maarse A.C."/>
            <person name="Schaefer M."/>
            <person name="Mueller-Auer S."/>
            <person name="Gabel C."/>
            <person name="Fuchs M."/>
            <person name="Fartmann B."/>
            <person name="Granderath K."/>
            <person name="Dauner D."/>
            <person name="Herzl A."/>
            <person name="Neumann S."/>
            <person name="Argiriou A."/>
            <person name="Vitale D."/>
            <person name="Liguori R."/>
            <person name="Piravandi E."/>
            <person name="Massenet O."/>
            <person name="Quigley F."/>
            <person name="Clabauld G."/>
            <person name="Muendlein A."/>
            <person name="Felber R."/>
            <person name="Schnabl S."/>
            <person name="Hiller R."/>
            <person name="Schmidt W."/>
            <person name="Lecharny A."/>
            <person name="Aubourg S."/>
            <person name="Chefdor F."/>
            <person name="Cooke R."/>
            <person name="Berger C."/>
            <person name="Monfort A."/>
            <person name="Casacuberta E."/>
            <person name="Gibbons T."/>
            <person name="Weber N."/>
            <person name="Vandenbol M."/>
            <person name="Bargues M."/>
            <person name="Terol J."/>
            <person name="Torres A."/>
            <person name="Perez-Perez A."/>
            <person name="Purnelle B."/>
            <person name="Bent E."/>
            <person name="Johnson S."/>
            <person name="Tacon D."/>
            <person name="Jesse T."/>
            <person name="Heijnen L."/>
            <person name="Schwarz S."/>
            <person name="Scholler P."/>
            <person name="Heber S."/>
            <person name="Francs P."/>
            <person name="Bielke C."/>
            <person name="Frishman D."/>
            <person name="Haase D."/>
            <person name="Lemcke K."/>
            <person name="Mewes H.-W."/>
            <person name="Stocker S."/>
            <person name="Zaccaria P."/>
            <person name="Bevan M."/>
            <person name="Wilson R.K."/>
            <person name="de la Bastide M."/>
            <person name="Habermann K."/>
            <person name="Parnell L."/>
            <person name="Dedhia N."/>
            <person name="Gnoj L."/>
            <person name="Schutz K."/>
            <person name="Huang E."/>
            <person name="Spiegel L."/>
            <person name="Sekhon M."/>
            <person name="Murray J."/>
            <person name="Sheet P."/>
            <person name="Cordes M."/>
            <person name="Abu-Threideh J."/>
            <person name="Stoneking T."/>
            <person name="Kalicki J."/>
            <person name="Graves T."/>
            <person name="Harmon G."/>
            <person name="Edwards J."/>
            <person name="Latreille P."/>
            <person name="Courtney L."/>
            <person name="Cloud J."/>
            <person name="Abbott A."/>
            <person name="Scott K."/>
            <person name="Johnson D."/>
            <person name="Minx P."/>
            <person name="Bentley D."/>
            <person name="Fulton B."/>
            <person name="Miller N."/>
            <person name="Greco T."/>
            <person name="Kemp K."/>
            <person name="Kramer J."/>
            <person name="Fulton L."/>
            <person name="Mardis E."/>
            <person name="Dante M."/>
            <person name="Pepin K."/>
            <person name="Hillier L.W."/>
            <person name="Nelson J."/>
            <person name="Spieth J."/>
            <person name="Ryan E."/>
            <person name="Andrews S."/>
            <person name="Geisel C."/>
            <person name="Layman D."/>
            <person name="Du H."/>
            <person name="Ali J."/>
            <person name="Berghoff A."/>
            <person name="Jones K."/>
            <person name="Drone K."/>
            <person name="Cotton M."/>
            <person name="Joshu C."/>
            <person name="Antonoiu B."/>
            <person name="Zidanic M."/>
            <person name="Strong C."/>
            <person name="Sun H."/>
            <person name="Lamar B."/>
            <person name="Yordan C."/>
            <person name="Ma P."/>
            <person name="Zhong J."/>
            <person name="Preston R."/>
            <person name="Vil D."/>
            <person name="Shekher M."/>
            <person name="Matero A."/>
            <person name="Shah R."/>
            <person name="Swaby I.K."/>
            <person name="O'Shaughnessy A."/>
            <person name="Rodriguez M."/>
            <person name="Hoffman J."/>
            <person name="Till S."/>
            <person name="Granat S."/>
            <person name="Shohdy N."/>
            <person name="Hasegawa A."/>
            <person name="Hameed A."/>
            <person name="Lodhi M."/>
            <person name="Johnson A."/>
            <person name="Chen E."/>
            <person name="Marra M.A."/>
            <person name="Martienssen R."/>
            <person name="McCombie W.R."/>
        </authorList>
    </citation>
    <scope>NUCLEOTIDE SEQUENCE [LARGE SCALE GENOMIC DNA]</scope>
    <source>
        <strain>cv. Columbia</strain>
    </source>
</reference>
<reference key="3">
    <citation type="journal article" date="2017" name="Plant J.">
        <title>Araport11: a complete reannotation of the Arabidopsis thaliana reference genome.</title>
        <authorList>
            <person name="Cheng C.Y."/>
            <person name="Krishnakumar V."/>
            <person name="Chan A.P."/>
            <person name="Thibaud-Nissen F."/>
            <person name="Schobel S."/>
            <person name="Town C.D."/>
        </authorList>
    </citation>
    <scope>GENOME REANNOTATION</scope>
    <source>
        <strain>cv. Columbia</strain>
    </source>
</reference>
<reference key="4">
    <citation type="journal article" date="2002" name="Science">
        <title>Functional annotation of a full-length Arabidopsis cDNA collection.</title>
        <authorList>
            <person name="Seki M."/>
            <person name="Narusaka M."/>
            <person name="Kamiya A."/>
            <person name="Ishida J."/>
            <person name="Satou M."/>
            <person name="Sakurai T."/>
            <person name="Nakajima M."/>
            <person name="Enju A."/>
            <person name="Akiyama K."/>
            <person name="Oono Y."/>
            <person name="Muramatsu M."/>
            <person name="Hayashizaki Y."/>
            <person name="Kawai J."/>
            <person name="Carninci P."/>
            <person name="Itoh M."/>
            <person name="Ishii Y."/>
            <person name="Arakawa T."/>
            <person name="Shibata K."/>
            <person name="Shinagawa A."/>
            <person name="Shinozaki K."/>
        </authorList>
    </citation>
    <scope>NUCLEOTIDE SEQUENCE [LARGE SCALE MRNA]</scope>
    <source>
        <strain>cv. Columbia</strain>
    </source>
</reference>
<reference key="5">
    <citation type="journal article" date="2003" name="Science">
        <title>Empirical analysis of transcriptional activity in the Arabidopsis genome.</title>
        <authorList>
            <person name="Yamada K."/>
            <person name="Lim J."/>
            <person name="Dale J.M."/>
            <person name="Chen H."/>
            <person name="Shinn P."/>
            <person name="Palm C.J."/>
            <person name="Southwick A.M."/>
            <person name="Wu H.C."/>
            <person name="Kim C.J."/>
            <person name="Nguyen M."/>
            <person name="Pham P.K."/>
            <person name="Cheuk R.F."/>
            <person name="Karlin-Newmann G."/>
            <person name="Liu S.X."/>
            <person name="Lam B."/>
            <person name="Sakano H."/>
            <person name="Wu T."/>
            <person name="Yu G."/>
            <person name="Miranda M."/>
            <person name="Quach H.L."/>
            <person name="Tripp M."/>
            <person name="Chang C.H."/>
            <person name="Lee J.M."/>
            <person name="Toriumi M.J."/>
            <person name="Chan M.M."/>
            <person name="Tang C.C."/>
            <person name="Onodera C.S."/>
            <person name="Deng J.M."/>
            <person name="Akiyama K."/>
            <person name="Ansari Y."/>
            <person name="Arakawa T."/>
            <person name="Banh J."/>
            <person name="Banno F."/>
            <person name="Bowser L."/>
            <person name="Brooks S.Y."/>
            <person name="Carninci P."/>
            <person name="Chao Q."/>
            <person name="Choy N."/>
            <person name="Enju A."/>
            <person name="Goldsmith A.D."/>
            <person name="Gurjal M."/>
            <person name="Hansen N.F."/>
            <person name="Hayashizaki Y."/>
            <person name="Johnson-Hopson C."/>
            <person name="Hsuan V.W."/>
            <person name="Iida K."/>
            <person name="Karnes M."/>
            <person name="Khan S."/>
            <person name="Koesema E."/>
            <person name="Ishida J."/>
            <person name="Jiang P.X."/>
            <person name="Jones T."/>
            <person name="Kawai J."/>
            <person name="Kamiya A."/>
            <person name="Meyers C."/>
            <person name="Nakajima M."/>
            <person name="Narusaka M."/>
            <person name="Seki M."/>
            <person name="Sakurai T."/>
            <person name="Satou M."/>
            <person name="Tamse R."/>
            <person name="Vaysberg M."/>
            <person name="Wallender E.K."/>
            <person name="Wong C."/>
            <person name="Yamamura Y."/>
            <person name="Yuan S."/>
            <person name="Shinozaki K."/>
            <person name="Davis R.W."/>
            <person name="Theologis A."/>
            <person name="Ecker J.R."/>
        </authorList>
    </citation>
    <scope>NUCLEOTIDE SEQUENCE [LARGE SCALE MRNA]</scope>
    <source>
        <strain>cv. Columbia</strain>
    </source>
</reference>
<reference key="6">
    <citation type="journal article" date="2006" name="Amino Acids">
        <title>Histidine biosynthesis in plants.</title>
        <authorList>
            <person name="Stepansky A."/>
            <person name="Leustek T."/>
        </authorList>
    </citation>
    <scope>GENE FAMILY</scope>
    <scope>NOMENCLATURE</scope>
</reference>
<reference key="7">
    <citation type="journal article" date="2007" name="Plant Physiol.">
        <title>Genetic dissection of histidine biosynthesis in Arabidopsis.</title>
        <authorList>
            <person name="Muralla R."/>
            <person name="Sweeney C."/>
            <person name="Stepansky A."/>
            <person name="Leustek T."/>
            <person name="Meinke D."/>
        </authorList>
    </citation>
    <scope>GENE FAMILY</scope>
    <scope>NOMENCLATURE</scope>
</reference>
<proteinExistence type="evidence at transcript level"/>
<accession>Q9SZ30</accession>
<accession>O80330</accession>
<accession>Q8GX14</accession>
<evidence type="ECO:0000250" key="1"/>
<evidence type="ECO:0000255" key="2"/>
<evidence type="ECO:0000305" key="3"/>
<feature type="transit peptide" description="Chloroplast" evidence="2">
    <location>
        <begin position="1"/>
        <end position="55"/>
    </location>
</feature>
<feature type="chain" id="PRO_0000013446" description="Imidazole glycerol phosphate synthase hisHF, chloroplastic">
    <location>
        <begin position="56"/>
        <end position="592"/>
    </location>
</feature>
<feature type="domain" description="Glutamine amidotransferase type-1">
    <location>
        <begin position="63"/>
        <end position="271"/>
    </location>
</feature>
<feature type="region of interest" description="Cyclase">
    <location>
        <begin position="280"/>
        <end position="592"/>
    </location>
</feature>
<feature type="active site" description="For GATase activity" evidence="1">
    <location>
        <position position="141"/>
    </location>
</feature>
<feature type="active site" description="For GATase activity" evidence="1">
    <location>
        <position position="246"/>
    </location>
</feature>
<feature type="active site" description="For GATase activity" evidence="1">
    <location>
        <position position="248"/>
    </location>
</feature>
<feature type="active site" evidence="2">
    <location>
        <position position="289"/>
    </location>
</feature>
<feature type="active site" evidence="2">
    <location>
        <position position="447"/>
    </location>
</feature>
<feature type="sequence conflict" description="In Ref. 1; BAA28783/BAA32287." evidence="3" ref="1">
    <original>A</original>
    <variation>P</variation>
    <location>
        <position position="110"/>
    </location>
</feature>
<feature type="sequence conflict" description="In Ref. 1; BAA28783/BAA32287." evidence="3" ref="1">
    <original>E</original>
    <variation>Q</variation>
    <location>
        <position position="153"/>
    </location>
</feature>
<feature type="sequence conflict" description="In Ref. 1; BAA28783/BAA32287." evidence="3" ref="1">
    <original>I</original>
    <variation>M</variation>
    <location>
        <position position="405"/>
    </location>
</feature>
<feature type="sequence conflict" description="In Ref. 1; BAA28783/BAA32287." evidence="3" ref="1">
    <original>S</original>
    <variation>F</variation>
    <location>
        <position position="413"/>
    </location>
</feature>
<feature type="sequence conflict" description="In Ref. 4; AAO64858 and 5; BAC43102." evidence="3" ref="4 5">
    <original>W</original>
    <variation>R</variation>
    <location>
        <position position="478"/>
    </location>
</feature>
<feature type="sequence conflict" description="In Ref. 1; BAA28783." evidence="3" ref="1">
    <original>R</original>
    <variation>Q</variation>
    <location>
        <position position="487"/>
    </location>
</feature>
<feature type="sequence conflict" description="In Ref. 1; BAA28783." evidence="3" ref="1">
    <original>D</original>
    <variation>N</variation>
    <location>
        <position position="515"/>
    </location>
</feature>
<feature type="sequence conflict" description="In Ref. 1; BAA28783." evidence="3" ref="1">
    <original>KTNASAALAAGIFHRKEVPI</original>
    <variation>EDKRICRACCRHFPPERGYQS</variation>
    <location>
        <begin position="557"/>
        <end position="576"/>
    </location>
</feature>
<keyword id="KW-0028">Amino-acid biosynthesis</keyword>
<keyword id="KW-0150">Chloroplast</keyword>
<keyword id="KW-0315">Glutamine amidotransferase</keyword>
<keyword id="KW-0368">Histidine biosynthesis</keyword>
<keyword id="KW-0378">Hydrolase</keyword>
<keyword id="KW-0456">Lyase</keyword>
<keyword id="KW-0511">Multifunctional enzyme</keyword>
<keyword id="KW-0934">Plastid</keyword>
<keyword id="KW-1185">Reference proteome</keyword>
<keyword id="KW-0809">Transit peptide</keyword>
<name>HIS4_ARATH</name>
<protein>
    <recommendedName>
        <fullName>Imidazole glycerol phosphate synthase hisHF, chloroplastic</fullName>
        <shortName>IGP synthase</shortName>
        <shortName>IGPS</shortName>
        <shortName>ImGP synthase</shortName>
        <ecNumber>4.3.2.10</ecNumber>
    </recommendedName>
    <alternativeName>
        <fullName>Protein HISTIDINE BIOSYNTHESIS 4</fullName>
    </alternativeName>
    <domain>
        <recommendedName>
            <fullName>Glutaminase</fullName>
            <ecNumber>3.5.1.2</ecNumber>
        </recommendedName>
    </domain>
    <domain>
        <recommendedName>
            <fullName>Cyclase</fullName>
        </recommendedName>
    </domain>
</protein>
<organism>
    <name type="scientific">Arabidopsis thaliana</name>
    <name type="common">Mouse-ear cress</name>
    <dbReference type="NCBI Taxonomy" id="3702"/>
    <lineage>
        <taxon>Eukaryota</taxon>
        <taxon>Viridiplantae</taxon>
        <taxon>Streptophyta</taxon>
        <taxon>Embryophyta</taxon>
        <taxon>Tracheophyta</taxon>
        <taxon>Spermatophyta</taxon>
        <taxon>Magnoliopsida</taxon>
        <taxon>eudicotyledons</taxon>
        <taxon>Gunneridae</taxon>
        <taxon>Pentapetalae</taxon>
        <taxon>rosids</taxon>
        <taxon>malvids</taxon>
        <taxon>Brassicales</taxon>
        <taxon>Brassicaceae</taxon>
        <taxon>Camelineae</taxon>
        <taxon>Arabidopsis</taxon>
    </lineage>
</organism>